<keyword id="KW-1185">Reference proteome</keyword>
<keyword id="KW-0708">Seed storage protein</keyword>
<keyword id="KW-0732">Signal</keyword>
<keyword id="KW-0758">Storage protein</keyword>
<sequence>MATKILSLLALLALFASATNASIIPQCSLAPSSIIPQFLPPVTSMAFEHPAVQAYRLQQAIAASVLQQPIAQLQQQSLAHLTIQTIATQQQQQFLPALSHLAMVNPIAYLQQQLLASNPLGLANVVANQQQQQLQQFLPALSQLAMVNPAAYLQQQQLLSSSPLAVANAPTYLQQELLQQIVPALTQLAVANPVAYLQQLLPFNQLTMSNSVAYLQQRQQLLNPLAVANPLVAAFLQQQQLLPYNRFSLMNPVLSRQQPIVGGAIF</sequence>
<dbReference type="EMBL" id="AF090447">
    <property type="protein sequence ID" value="AAK39397.1"/>
    <property type="molecule type" value="Genomic_DNA"/>
</dbReference>
<dbReference type="EMBL" id="EU116486">
    <property type="protein sequence ID" value="ABV71968.1"/>
    <property type="molecule type" value="mRNA"/>
</dbReference>
<dbReference type="EMBL" id="EU116493">
    <property type="protein sequence ID" value="ABV71975.1"/>
    <property type="molecule type" value="mRNA"/>
</dbReference>
<dbReference type="STRING" id="4577.Q94IM1"/>
<dbReference type="InParanoid" id="Q94IM1"/>
<dbReference type="Proteomes" id="UP000007305">
    <property type="component" value="Unplaced"/>
</dbReference>
<dbReference type="ExpressionAtlas" id="Q94IM1">
    <property type="expression patterns" value="baseline and differential"/>
</dbReference>
<dbReference type="GO" id="GO:0045735">
    <property type="term" value="F:nutrient reservoir activity"/>
    <property type="evidence" value="ECO:0007669"/>
    <property type="project" value="UniProtKB-KW"/>
</dbReference>
<dbReference type="InterPro" id="IPR052508">
    <property type="entry name" value="Maize_Zein_Storage"/>
</dbReference>
<dbReference type="InterPro" id="IPR002530">
    <property type="entry name" value="Zein"/>
</dbReference>
<dbReference type="PANTHER" id="PTHR48244:SF3">
    <property type="entry name" value="22 KDA ALPHA-ZEIN 8"/>
    <property type="match status" value="1"/>
</dbReference>
<dbReference type="PANTHER" id="PTHR48244">
    <property type="entry name" value="ZEIN-ALPHA A20-RELATED"/>
    <property type="match status" value="1"/>
</dbReference>
<dbReference type="Pfam" id="PF01559">
    <property type="entry name" value="Zein"/>
    <property type="match status" value="1"/>
</dbReference>
<comment type="function">
    <text evidence="4">Zeins are major seed storage proteins.</text>
</comment>
<comment type="miscellaneous">
    <text>The alpha zeins of 19 kDa and 22 kDa account for 70% of the total zein fraction. They are encoded by a large multigene family.</text>
</comment>
<comment type="miscellaneous">
    <text evidence="1">Structurally, 22K and 19K zeins are composed of nine adjacent, topologically antiparallel helices clustered within a distorted cylinder.</text>
</comment>
<comment type="similarity">
    <text evidence="4">Belongs to the zein family.</text>
</comment>
<protein>
    <recommendedName>
        <fullName evidence="3">22 kDa alpha-zein 14</fullName>
    </recommendedName>
</protein>
<name>ZEAZS_MAIZE</name>
<reference key="1">
    <citation type="journal article" date="2001" name="Genome Res.">
        <title>Sequence, regulation, and evolution of the maize 22-kD alpha zein gene family.</title>
        <authorList>
            <person name="Song R."/>
            <person name="Llaca V."/>
            <person name="Linton E."/>
            <person name="Messing J."/>
        </authorList>
    </citation>
    <scope>NUCLEOTIDE SEQUENCE [GENOMIC DNA]</scope>
    <scope>GENE FAMILY</scope>
    <scope>NOMENCLATURE</scope>
    <source>
        <strain>cv. BSSS53</strain>
    </source>
</reference>
<reference key="2">
    <citation type="submission" date="2007-08" db="EMBL/GenBank/DDBJ databases">
        <title>Expressional profiling of maize-zein super gene family during endosperm development.</title>
        <authorList>
            <person name="Feng L."/>
            <person name="Zhu J."/>
            <person name="Wang G."/>
            <person name="Xu Z."/>
            <person name="Song R."/>
        </authorList>
    </citation>
    <scope>NUCLEOTIDE SEQUENCE [MRNA] OF 38-263</scope>
    <source>
        <strain>cv. BSSS53</strain>
    </source>
</reference>
<organism evidence="5">
    <name type="scientific">Zea mays</name>
    <name type="common">Maize</name>
    <dbReference type="NCBI Taxonomy" id="4577"/>
    <lineage>
        <taxon>Eukaryota</taxon>
        <taxon>Viridiplantae</taxon>
        <taxon>Streptophyta</taxon>
        <taxon>Embryophyta</taxon>
        <taxon>Tracheophyta</taxon>
        <taxon>Spermatophyta</taxon>
        <taxon>Magnoliopsida</taxon>
        <taxon>Liliopsida</taxon>
        <taxon>Poales</taxon>
        <taxon>Poaceae</taxon>
        <taxon>PACMAD clade</taxon>
        <taxon>Panicoideae</taxon>
        <taxon>Andropogonodae</taxon>
        <taxon>Andropogoneae</taxon>
        <taxon>Tripsacinae</taxon>
        <taxon>Zea</taxon>
    </lineage>
</organism>
<accession>Q94IM1</accession>
<accession>A8HNL0</accession>
<evidence type="ECO:0000250" key="1">
    <source>
        <dbReference type="UniProtKB" id="P04698"/>
    </source>
</evidence>
<evidence type="ECO:0000255" key="2"/>
<evidence type="ECO:0000303" key="3">
    <source>
    </source>
</evidence>
<evidence type="ECO:0000305" key="4"/>
<evidence type="ECO:0000312" key="5">
    <source>
        <dbReference type="EMBL" id="AAK39397.1"/>
    </source>
</evidence>
<gene>
    <name evidence="3" type="primary">AZS22-14</name>
</gene>
<feature type="signal peptide" evidence="2">
    <location>
        <begin position="1"/>
        <end position="21"/>
    </location>
</feature>
<feature type="chain" id="PRO_5004322236" description="22 kDa alpha-zein 14" evidence="2">
    <location>
        <begin position="22"/>
        <end position="266"/>
    </location>
</feature>
<proteinExistence type="evidence at transcript level"/>